<evidence type="ECO:0000255" key="1">
    <source>
        <dbReference type="HAMAP-Rule" id="MF_01551"/>
    </source>
</evidence>
<gene>
    <name evidence="1" type="primary">rlmM</name>
    <name type="ordered locus">XCV0924</name>
</gene>
<reference key="1">
    <citation type="journal article" date="2005" name="J. Bacteriol.">
        <title>Insights into genome plasticity and pathogenicity of the plant pathogenic Bacterium Xanthomonas campestris pv. vesicatoria revealed by the complete genome sequence.</title>
        <authorList>
            <person name="Thieme F."/>
            <person name="Koebnik R."/>
            <person name="Bekel T."/>
            <person name="Berger C."/>
            <person name="Boch J."/>
            <person name="Buettner D."/>
            <person name="Caldana C."/>
            <person name="Gaigalat L."/>
            <person name="Goesmann A."/>
            <person name="Kay S."/>
            <person name="Kirchner O."/>
            <person name="Lanz C."/>
            <person name="Linke B."/>
            <person name="McHardy A.C."/>
            <person name="Meyer F."/>
            <person name="Mittenhuber G."/>
            <person name="Nies D.H."/>
            <person name="Niesbach-Kloesgen U."/>
            <person name="Patschkowski T."/>
            <person name="Rueckert C."/>
            <person name="Rupp O."/>
            <person name="Schneiker S."/>
            <person name="Schuster S.C."/>
            <person name="Vorhoelter F.J."/>
            <person name="Weber E."/>
            <person name="Puehler A."/>
            <person name="Bonas U."/>
            <person name="Bartels D."/>
            <person name="Kaiser O."/>
        </authorList>
    </citation>
    <scope>NUCLEOTIDE SEQUENCE [LARGE SCALE GENOMIC DNA]</scope>
    <source>
        <strain>85-10</strain>
    </source>
</reference>
<accession>Q3BX58</accession>
<sequence length="347" mass="38998">MSGLVCYCRQGFEPELAAELSARAAFVGIAGYARTQRNDGYVLFVCDEAAQLAAKLQWRELIFARQKLVVIAELKGIDPKDRITPILAALDGHQRFGDLWVEHPDSDAGKPLAGLARSFGNALRPALRKAGLLTDKPQLRQPRLHVCFLDGDHAVLAVADNADSAPWPLGIPRLKLLPEAPSRSALKLDEALLTLLTPEERDALVKPGMRAADLGAAPGGWTWVLTRQHVHVTSVDNGPLREHVLETGLVEHLRADGFHWKPAQPLDWMVCDMVEQPRRVAERMATWVREGWCRNTIFNLKLPMKKRWDETRLCLDLFEQQAEKSLIVRAKQLYHDREEITVLAMRE</sequence>
<protein>
    <recommendedName>
        <fullName evidence="1">Ribosomal RNA large subunit methyltransferase M</fullName>
        <ecNumber evidence="1">2.1.1.186</ecNumber>
    </recommendedName>
    <alternativeName>
        <fullName evidence="1">23S rRNA (cytidine2498-2'-O)-methyltransferase</fullName>
    </alternativeName>
    <alternativeName>
        <fullName evidence="1">23S rRNA 2'-O-ribose methyltransferase RlmM</fullName>
    </alternativeName>
</protein>
<feature type="chain" id="PRO_0000314549" description="Ribosomal RNA large subunit methyltransferase M">
    <location>
        <begin position="1"/>
        <end position="347"/>
    </location>
</feature>
<feature type="active site" description="Proton acceptor" evidence="1">
    <location>
        <position position="301"/>
    </location>
</feature>
<feature type="binding site" evidence="1">
    <location>
        <position position="184"/>
    </location>
    <ligand>
        <name>S-adenosyl-L-methionine</name>
        <dbReference type="ChEBI" id="CHEBI:59789"/>
    </ligand>
</feature>
<feature type="binding site" evidence="1">
    <location>
        <begin position="217"/>
        <end position="220"/>
    </location>
    <ligand>
        <name>S-adenosyl-L-methionine</name>
        <dbReference type="ChEBI" id="CHEBI:59789"/>
    </ligand>
</feature>
<feature type="binding site" evidence="1">
    <location>
        <position position="236"/>
    </location>
    <ligand>
        <name>S-adenosyl-L-methionine</name>
        <dbReference type="ChEBI" id="CHEBI:59789"/>
    </ligand>
</feature>
<feature type="binding site" evidence="1">
    <location>
        <position position="256"/>
    </location>
    <ligand>
        <name>S-adenosyl-L-methionine</name>
        <dbReference type="ChEBI" id="CHEBI:59789"/>
    </ligand>
</feature>
<feature type="binding site" evidence="1">
    <location>
        <position position="272"/>
    </location>
    <ligand>
        <name>S-adenosyl-L-methionine</name>
        <dbReference type="ChEBI" id="CHEBI:59789"/>
    </ligand>
</feature>
<proteinExistence type="inferred from homology"/>
<comment type="function">
    <text evidence="1">Catalyzes the 2'-O-methylation at nucleotide C2498 in 23S rRNA.</text>
</comment>
<comment type="catalytic activity">
    <reaction evidence="1">
        <text>cytidine(2498) in 23S rRNA + S-adenosyl-L-methionine = 2'-O-methylcytidine(2498) in 23S rRNA + S-adenosyl-L-homocysteine + H(+)</text>
        <dbReference type="Rhea" id="RHEA:42788"/>
        <dbReference type="Rhea" id="RHEA-COMP:10244"/>
        <dbReference type="Rhea" id="RHEA-COMP:10245"/>
        <dbReference type="ChEBI" id="CHEBI:15378"/>
        <dbReference type="ChEBI" id="CHEBI:57856"/>
        <dbReference type="ChEBI" id="CHEBI:59789"/>
        <dbReference type="ChEBI" id="CHEBI:74495"/>
        <dbReference type="ChEBI" id="CHEBI:82748"/>
        <dbReference type="EC" id="2.1.1.186"/>
    </reaction>
</comment>
<comment type="subunit">
    <text evidence="1">Monomer.</text>
</comment>
<comment type="subcellular location">
    <subcellularLocation>
        <location evidence="1">Cytoplasm</location>
    </subcellularLocation>
</comment>
<comment type="similarity">
    <text evidence="1">Belongs to the class I-like SAM-binding methyltransferase superfamily. RNA methyltransferase RlmE family. RlmM subfamily.</text>
</comment>
<name>RLMM_XANE5</name>
<dbReference type="EC" id="2.1.1.186" evidence="1"/>
<dbReference type="EMBL" id="AM039952">
    <property type="protein sequence ID" value="CAJ22555.1"/>
    <property type="molecule type" value="Genomic_DNA"/>
</dbReference>
<dbReference type="RefSeq" id="WP_011346493.1">
    <property type="nucleotide sequence ID" value="NZ_CP017190.1"/>
</dbReference>
<dbReference type="SMR" id="Q3BX58"/>
<dbReference type="STRING" id="456327.BJD11_18165"/>
<dbReference type="KEGG" id="xcv:XCV0924"/>
<dbReference type="eggNOG" id="COG2933">
    <property type="taxonomic scope" value="Bacteria"/>
</dbReference>
<dbReference type="HOGENOM" id="CLU_043780_0_0_6"/>
<dbReference type="Proteomes" id="UP000007069">
    <property type="component" value="Chromosome"/>
</dbReference>
<dbReference type="GO" id="GO:0005737">
    <property type="term" value="C:cytoplasm"/>
    <property type="evidence" value="ECO:0007669"/>
    <property type="project" value="UniProtKB-SubCell"/>
</dbReference>
<dbReference type="GO" id="GO:0008757">
    <property type="term" value="F:S-adenosylmethionine-dependent methyltransferase activity"/>
    <property type="evidence" value="ECO:0007669"/>
    <property type="project" value="UniProtKB-UniRule"/>
</dbReference>
<dbReference type="GO" id="GO:0032259">
    <property type="term" value="P:methylation"/>
    <property type="evidence" value="ECO:0007669"/>
    <property type="project" value="UniProtKB-KW"/>
</dbReference>
<dbReference type="GO" id="GO:0006364">
    <property type="term" value="P:rRNA processing"/>
    <property type="evidence" value="ECO:0007669"/>
    <property type="project" value="UniProtKB-UniRule"/>
</dbReference>
<dbReference type="Gene3D" id="3.30.2300.20">
    <property type="match status" value="1"/>
</dbReference>
<dbReference type="Gene3D" id="3.30.70.2810">
    <property type="match status" value="1"/>
</dbReference>
<dbReference type="Gene3D" id="3.40.50.150">
    <property type="entry name" value="Vaccinia Virus protein VP39"/>
    <property type="match status" value="1"/>
</dbReference>
<dbReference type="HAMAP" id="MF_01551">
    <property type="entry name" value="23SrRNA_methyltr_M"/>
    <property type="match status" value="1"/>
</dbReference>
<dbReference type="InterPro" id="IPR040739">
    <property type="entry name" value="RlmM_FDX"/>
</dbReference>
<dbReference type="InterPro" id="IPR048646">
    <property type="entry name" value="RlmM_THUMP-like"/>
</dbReference>
<dbReference type="InterPro" id="IPR002877">
    <property type="entry name" value="RNA_MeTrfase_FtsJ_dom"/>
</dbReference>
<dbReference type="InterPro" id="IPR011224">
    <property type="entry name" value="rRNA_MeTrfase_M"/>
</dbReference>
<dbReference type="InterPro" id="IPR029063">
    <property type="entry name" value="SAM-dependent_MTases_sf"/>
</dbReference>
<dbReference type="NCBIfam" id="NF008734">
    <property type="entry name" value="PRK11760.1"/>
    <property type="match status" value="1"/>
</dbReference>
<dbReference type="PANTHER" id="PTHR37524">
    <property type="entry name" value="RIBOSOMAL RNA LARGE SUBUNIT METHYLTRANSFERASE M"/>
    <property type="match status" value="1"/>
</dbReference>
<dbReference type="PANTHER" id="PTHR37524:SF2">
    <property type="entry name" value="RIBOSOMAL RNA METHYLTRANSFERASE FTSJ DOMAIN-CONTAINING PROTEIN"/>
    <property type="match status" value="1"/>
</dbReference>
<dbReference type="Pfam" id="PF01728">
    <property type="entry name" value="FtsJ"/>
    <property type="match status" value="1"/>
</dbReference>
<dbReference type="Pfam" id="PF18125">
    <property type="entry name" value="RlmM_FDX"/>
    <property type="match status" value="1"/>
</dbReference>
<dbReference type="Pfam" id="PF21239">
    <property type="entry name" value="RLMM_N"/>
    <property type="match status" value="1"/>
</dbReference>
<dbReference type="PIRSF" id="PIRSF028774">
    <property type="entry name" value="UCP028774"/>
    <property type="match status" value="1"/>
</dbReference>
<dbReference type="SUPFAM" id="SSF53335">
    <property type="entry name" value="S-adenosyl-L-methionine-dependent methyltransferases"/>
    <property type="match status" value="1"/>
</dbReference>
<keyword id="KW-0963">Cytoplasm</keyword>
<keyword id="KW-0489">Methyltransferase</keyword>
<keyword id="KW-0698">rRNA processing</keyword>
<keyword id="KW-0949">S-adenosyl-L-methionine</keyword>
<keyword id="KW-0808">Transferase</keyword>
<organism>
    <name type="scientific">Xanthomonas euvesicatoria pv. vesicatoria (strain 85-10)</name>
    <name type="common">Xanthomonas campestris pv. vesicatoria</name>
    <dbReference type="NCBI Taxonomy" id="316273"/>
    <lineage>
        <taxon>Bacteria</taxon>
        <taxon>Pseudomonadati</taxon>
        <taxon>Pseudomonadota</taxon>
        <taxon>Gammaproteobacteria</taxon>
        <taxon>Lysobacterales</taxon>
        <taxon>Lysobacteraceae</taxon>
        <taxon>Xanthomonas</taxon>
    </lineage>
</organism>